<gene>
    <name evidence="1" type="primary">rpsH</name>
    <name type="ordered locus">cgR_0636</name>
</gene>
<organism>
    <name type="scientific">Corynebacterium glutamicum (strain R)</name>
    <dbReference type="NCBI Taxonomy" id="340322"/>
    <lineage>
        <taxon>Bacteria</taxon>
        <taxon>Bacillati</taxon>
        <taxon>Actinomycetota</taxon>
        <taxon>Actinomycetes</taxon>
        <taxon>Mycobacteriales</taxon>
        <taxon>Corynebacteriaceae</taxon>
        <taxon>Corynebacterium</taxon>
    </lineage>
</organism>
<sequence>MTMTDPIADMLSRVRNASNAHHDTVSMPSSKIKANIAEILKQEGYIANYTVEDAKVGKTLSLELKYSNTRERSIAGLRRVSKPGLRVYAKSTNLPQVLGGLGVAIISTSQGLLTDRQATEKGVGGEVLAYVW</sequence>
<evidence type="ECO:0000255" key="1">
    <source>
        <dbReference type="HAMAP-Rule" id="MF_01302"/>
    </source>
</evidence>
<evidence type="ECO:0000305" key="2"/>
<feature type="chain" id="PRO_0000305741" description="Small ribosomal subunit protein uS8">
    <location>
        <begin position="1"/>
        <end position="132"/>
    </location>
</feature>
<protein>
    <recommendedName>
        <fullName evidence="1">Small ribosomal subunit protein uS8</fullName>
    </recommendedName>
    <alternativeName>
        <fullName evidence="2">30S ribosomal protein S8</fullName>
    </alternativeName>
</protein>
<proteinExistence type="inferred from homology"/>
<keyword id="KW-0687">Ribonucleoprotein</keyword>
<keyword id="KW-0689">Ribosomal protein</keyword>
<keyword id="KW-0694">RNA-binding</keyword>
<keyword id="KW-0699">rRNA-binding</keyword>
<reference key="1">
    <citation type="journal article" date="2007" name="Microbiology">
        <title>Comparative analysis of the Corynebacterium glutamicum group and complete genome sequence of strain R.</title>
        <authorList>
            <person name="Yukawa H."/>
            <person name="Omumasaba C.A."/>
            <person name="Nonaka H."/>
            <person name="Kos P."/>
            <person name="Okai N."/>
            <person name="Suzuki N."/>
            <person name="Suda M."/>
            <person name="Tsuge Y."/>
            <person name="Watanabe J."/>
            <person name="Ikeda Y."/>
            <person name="Vertes A.A."/>
            <person name="Inui M."/>
        </authorList>
    </citation>
    <scope>NUCLEOTIDE SEQUENCE [LARGE SCALE GENOMIC DNA]</scope>
    <source>
        <strain>R</strain>
    </source>
</reference>
<dbReference type="EMBL" id="AP009044">
    <property type="protein sequence ID" value="BAF53607.1"/>
    <property type="molecule type" value="Genomic_DNA"/>
</dbReference>
<dbReference type="RefSeq" id="WP_003854344.1">
    <property type="nucleotide sequence ID" value="NC_009342.1"/>
</dbReference>
<dbReference type="SMR" id="A4QBL0"/>
<dbReference type="GeneID" id="1021538"/>
<dbReference type="KEGG" id="cgt:cgR_0636"/>
<dbReference type="HOGENOM" id="CLU_098428_0_1_11"/>
<dbReference type="PhylomeDB" id="A4QBL0"/>
<dbReference type="Proteomes" id="UP000006698">
    <property type="component" value="Chromosome"/>
</dbReference>
<dbReference type="GO" id="GO:1990904">
    <property type="term" value="C:ribonucleoprotein complex"/>
    <property type="evidence" value="ECO:0007669"/>
    <property type="project" value="UniProtKB-KW"/>
</dbReference>
<dbReference type="GO" id="GO:0005840">
    <property type="term" value="C:ribosome"/>
    <property type="evidence" value="ECO:0007669"/>
    <property type="project" value="UniProtKB-KW"/>
</dbReference>
<dbReference type="GO" id="GO:0019843">
    <property type="term" value="F:rRNA binding"/>
    <property type="evidence" value="ECO:0007669"/>
    <property type="project" value="UniProtKB-UniRule"/>
</dbReference>
<dbReference type="GO" id="GO:0003735">
    <property type="term" value="F:structural constituent of ribosome"/>
    <property type="evidence" value="ECO:0007669"/>
    <property type="project" value="InterPro"/>
</dbReference>
<dbReference type="GO" id="GO:0006412">
    <property type="term" value="P:translation"/>
    <property type="evidence" value="ECO:0007669"/>
    <property type="project" value="UniProtKB-UniRule"/>
</dbReference>
<dbReference type="FunFam" id="3.30.1370.30:FF:000002">
    <property type="entry name" value="30S ribosomal protein S8"/>
    <property type="match status" value="1"/>
</dbReference>
<dbReference type="FunFam" id="3.30.1490.10:FF:000001">
    <property type="entry name" value="30S ribosomal protein S8"/>
    <property type="match status" value="1"/>
</dbReference>
<dbReference type="Gene3D" id="3.30.1370.30">
    <property type="match status" value="1"/>
</dbReference>
<dbReference type="Gene3D" id="3.30.1490.10">
    <property type="match status" value="1"/>
</dbReference>
<dbReference type="HAMAP" id="MF_01302_B">
    <property type="entry name" value="Ribosomal_uS8_B"/>
    <property type="match status" value="1"/>
</dbReference>
<dbReference type="InterPro" id="IPR000630">
    <property type="entry name" value="Ribosomal_uS8"/>
</dbReference>
<dbReference type="InterPro" id="IPR035987">
    <property type="entry name" value="Ribosomal_uS8_sf"/>
</dbReference>
<dbReference type="NCBIfam" id="NF001109">
    <property type="entry name" value="PRK00136.1"/>
    <property type="match status" value="1"/>
</dbReference>
<dbReference type="PANTHER" id="PTHR11758">
    <property type="entry name" value="40S RIBOSOMAL PROTEIN S15A"/>
    <property type="match status" value="1"/>
</dbReference>
<dbReference type="Pfam" id="PF00410">
    <property type="entry name" value="Ribosomal_S8"/>
    <property type="match status" value="1"/>
</dbReference>
<dbReference type="SUPFAM" id="SSF56047">
    <property type="entry name" value="Ribosomal protein S8"/>
    <property type="match status" value="1"/>
</dbReference>
<comment type="function">
    <text evidence="1">One of the primary rRNA binding proteins, it binds directly to 16S rRNA central domain where it helps coordinate assembly of the platform of the 30S subunit.</text>
</comment>
<comment type="subunit">
    <text evidence="1">Part of the 30S ribosomal subunit. Contacts proteins S5 and S12.</text>
</comment>
<comment type="similarity">
    <text evidence="1">Belongs to the universal ribosomal protein uS8 family.</text>
</comment>
<accession>A4QBL0</accession>
<name>RS8_CORGB</name>